<sequence>MVEQNLEKLQTDLVETEQRLAAIIDSFIELGVYVYDFPGTEDSMQGMVTNMQRNVDRMKQLNQQANDPESQLQNFLVPLDVLQYIEDGRNPDVYTREFVEAIRRSNQYQRAKIHGLNKLRDSLAEKIIDELPELQPHVESIIARTSPQRTDPISPSIVDKP</sequence>
<dbReference type="EMBL" id="CR382122">
    <property type="protein sequence ID" value="CAH02399.1"/>
    <property type="molecule type" value="Genomic_DNA"/>
</dbReference>
<dbReference type="RefSeq" id="XP_452006.1">
    <property type="nucleotide sequence ID" value="XM_452006.1"/>
</dbReference>
<dbReference type="SMR" id="Q6CVN3"/>
<dbReference type="FunCoup" id="Q6CVN3">
    <property type="interactions" value="619"/>
</dbReference>
<dbReference type="STRING" id="284590.Q6CVN3"/>
<dbReference type="PaxDb" id="284590-Q6CVN3"/>
<dbReference type="KEGG" id="kla:KLLA0_B10714g"/>
<dbReference type="eggNOG" id="KOG3046">
    <property type="taxonomic scope" value="Eukaryota"/>
</dbReference>
<dbReference type="HOGENOM" id="CLU_096169_1_0_1"/>
<dbReference type="InParanoid" id="Q6CVN3"/>
<dbReference type="OMA" id="QYQRAKM"/>
<dbReference type="Proteomes" id="UP000000598">
    <property type="component" value="Chromosome B"/>
</dbReference>
<dbReference type="GO" id="GO:0016592">
    <property type="term" value="C:mediator complex"/>
    <property type="evidence" value="ECO:0007669"/>
    <property type="project" value="InterPro"/>
</dbReference>
<dbReference type="GO" id="GO:0003712">
    <property type="term" value="F:transcription coregulator activity"/>
    <property type="evidence" value="ECO:0007669"/>
    <property type="project" value="InterPro"/>
</dbReference>
<dbReference type="GO" id="GO:0006357">
    <property type="term" value="P:regulation of transcription by RNA polymerase II"/>
    <property type="evidence" value="ECO:0007669"/>
    <property type="project" value="InterPro"/>
</dbReference>
<dbReference type="InterPro" id="IPR019145">
    <property type="entry name" value="Mediator_Med10"/>
</dbReference>
<dbReference type="PANTHER" id="PTHR13345">
    <property type="entry name" value="MEDIATOR OF RNA POLYMERASE II TRANSCRIPTION SUBUNIT 10"/>
    <property type="match status" value="1"/>
</dbReference>
<dbReference type="PANTHER" id="PTHR13345:SF13">
    <property type="entry name" value="MEDIATOR OF RNA POLYMERASE II TRANSCRIPTION SUBUNIT 10"/>
    <property type="match status" value="1"/>
</dbReference>
<dbReference type="Pfam" id="PF09748">
    <property type="entry name" value="Med10"/>
    <property type="match status" value="1"/>
</dbReference>
<reference key="1">
    <citation type="journal article" date="2004" name="Nature">
        <title>Genome evolution in yeasts.</title>
        <authorList>
            <person name="Dujon B."/>
            <person name="Sherman D."/>
            <person name="Fischer G."/>
            <person name="Durrens P."/>
            <person name="Casaregola S."/>
            <person name="Lafontaine I."/>
            <person name="de Montigny J."/>
            <person name="Marck C."/>
            <person name="Neuveglise C."/>
            <person name="Talla E."/>
            <person name="Goffard N."/>
            <person name="Frangeul L."/>
            <person name="Aigle M."/>
            <person name="Anthouard V."/>
            <person name="Babour A."/>
            <person name="Barbe V."/>
            <person name="Barnay S."/>
            <person name="Blanchin S."/>
            <person name="Beckerich J.-M."/>
            <person name="Beyne E."/>
            <person name="Bleykasten C."/>
            <person name="Boisrame A."/>
            <person name="Boyer J."/>
            <person name="Cattolico L."/>
            <person name="Confanioleri F."/>
            <person name="de Daruvar A."/>
            <person name="Despons L."/>
            <person name="Fabre E."/>
            <person name="Fairhead C."/>
            <person name="Ferry-Dumazet H."/>
            <person name="Groppi A."/>
            <person name="Hantraye F."/>
            <person name="Hennequin C."/>
            <person name="Jauniaux N."/>
            <person name="Joyet P."/>
            <person name="Kachouri R."/>
            <person name="Kerrest A."/>
            <person name="Koszul R."/>
            <person name="Lemaire M."/>
            <person name="Lesur I."/>
            <person name="Ma L."/>
            <person name="Muller H."/>
            <person name="Nicaud J.-M."/>
            <person name="Nikolski M."/>
            <person name="Oztas S."/>
            <person name="Ozier-Kalogeropoulos O."/>
            <person name="Pellenz S."/>
            <person name="Potier S."/>
            <person name="Richard G.-F."/>
            <person name="Straub M.-L."/>
            <person name="Suleau A."/>
            <person name="Swennen D."/>
            <person name="Tekaia F."/>
            <person name="Wesolowski-Louvel M."/>
            <person name="Westhof E."/>
            <person name="Wirth B."/>
            <person name="Zeniou-Meyer M."/>
            <person name="Zivanovic Y."/>
            <person name="Bolotin-Fukuhara M."/>
            <person name="Thierry A."/>
            <person name="Bouchier C."/>
            <person name="Caudron B."/>
            <person name="Scarpelli C."/>
            <person name="Gaillardin C."/>
            <person name="Weissenbach J."/>
            <person name="Wincker P."/>
            <person name="Souciet J.-L."/>
        </authorList>
    </citation>
    <scope>NUCLEOTIDE SEQUENCE [LARGE SCALE GENOMIC DNA]</scope>
    <source>
        <strain>ATCC 8585 / CBS 2359 / DSM 70799 / NBRC 1267 / NRRL Y-1140 / WM37</strain>
    </source>
</reference>
<organism>
    <name type="scientific">Kluyveromyces lactis (strain ATCC 8585 / CBS 2359 / DSM 70799 / NBRC 1267 / NRRL Y-1140 / WM37)</name>
    <name type="common">Yeast</name>
    <name type="synonym">Candida sphaerica</name>
    <dbReference type="NCBI Taxonomy" id="284590"/>
    <lineage>
        <taxon>Eukaryota</taxon>
        <taxon>Fungi</taxon>
        <taxon>Dikarya</taxon>
        <taxon>Ascomycota</taxon>
        <taxon>Saccharomycotina</taxon>
        <taxon>Saccharomycetes</taxon>
        <taxon>Saccharomycetales</taxon>
        <taxon>Saccharomycetaceae</taxon>
        <taxon>Kluyveromyces</taxon>
    </lineage>
</organism>
<gene>
    <name type="primary">NUT2</name>
    <name type="synonym">MED10</name>
    <name type="ordered locus">KLLA0B10714g</name>
</gene>
<feature type="chain" id="PRO_0000303172" description="Mediator of RNA polymerase II transcription subunit 10">
    <location>
        <begin position="1"/>
        <end position="161"/>
    </location>
</feature>
<proteinExistence type="inferred from homology"/>
<name>MED10_KLULA</name>
<protein>
    <recommendedName>
        <fullName>Mediator of RNA polymerase II transcription subunit 10</fullName>
    </recommendedName>
    <alternativeName>
        <fullName>Mediator complex subunit 10</fullName>
    </alternativeName>
</protein>
<accession>Q6CVN3</accession>
<evidence type="ECO:0000250" key="1"/>
<evidence type="ECO:0000305" key="2"/>
<keyword id="KW-0010">Activator</keyword>
<keyword id="KW-0539">Nucleus</keyword>
<keyword id="KW-1185">Reference proteome</keyword>
<keyword id="KW-0804">Transcription</keyword>
<keyword id="KW-0805">Transcription regulation</keyword>
<comment type="function">
    <text evidence="1">Component of the Mediator complex, a coactivator involved in the regulated transcription of nearly all RNA polymerase II-dependent genes. Mediator functions as a bridge to convey information from gene-specific regulatory proteins to the basal RNA polymerase II transcription machinery. Mediator is recruited to promoters by direct interactions with regulatory proteins and serves as a scaffold for the assembly of a functional preinitiation complex with RNA polymerase II and the general transcription factors (By similarity).</text>
</comment>
<comment type="subunit">
    <text evidence="1">Component of the Mediator complex.</text>
</comment>
<comment type="subcellular location">
    <subcellularLocation>
        <location evidence="1">Nucleus</location>
    </subcellularLocation>
</comment>
<comment type="similarity">
    <text evidence="2">Belongs to the Mediator complex subunit 10 family.</text>
</comment>